<comment type="function">
    <text evidence="1">Functions in the biosynthesis of branched-chain amino acids. Catalyzes the dehydration of (2R,3R)-2,3-dihydroxy-3-methylpentanoate (2,3-dihydroxy-3-methylvalerate) into 2-oxo-3-methylpentanoate (2-oxo-3-methylvalerate) and of (2R)-2,3-dihydroxy-3-methylbutanoate (2,3-dihydroxyisovalerate) into 2-oxo-3-methylbutanoate (2-oxoisovalerate), the penultimate precursor to L-isoleucine and L-valine, respectively.</text>
</comment>
<comment type="catalytic activity">
    <reaction evidence="1">
        <text>(2R)-2,3-dihydroxy-3-methylbutanoate = 3-methyl-2-oxobutanoate + H2O</text>
        <dbReference type="Rhea" id="RHEA:24809"/>
        <dbReference type="ChEBI" id="CHEBI:11851"/>
        <dbReference type="ChEBI" id="CHEBI:15377"/>
        <dbReference type="ChEBI" id="CHEBI:49072"/>
        <dbReference type="EC" id="4.2.1.9"/>
    </reaction>
    <physiologicalReaction direction="left-to-right" evidence="1">
        <dbReference type="Rhea" id="RHEA:24810"/>
    </physiologicalReaction>
</comment>
<comment type="catalytic activity">
    <reaction evidence="1">
        <text>(2R,3R)-2,3-dihydroxy-3-methylpentanoate = (S)-3-methyl-2-oxopentanoate + H2O</text>
        <dbReference type="Rhea" id="RHEA:27694"/>
        <dbReference type="ChEBI" id="CHEBI:15377"/>
        <dbReference type="ChEBI" id="CHEBI:35146"/>
        <dbReference type="ChEBI" id="CHEBI:49258"/>
        <dbReference type="EC" id="4.2.1.9"/>
    </reaction>
    <physiologicalReaction direction="left-to-right" evidence="1">
        <dbReference type="Rhea" id="RHEA:27695"/>
    </physiologicalReaction>
</comment>
<comment type="cofactor">
    <cofactor evidence="1">
        <name>[2Fe-2S] cluster</name>
        <dbReference type="ChEBI" id="CHEBI:190135"/>
    </cofactor>
    <text evidence="1">Binds 1 [2Fe-2S] cluster per subunit. This cluster acts as a Lewis acid cofactor.</text>
</comment>
<comment type="cofactor">
    <cofactor evidence="1">
        <name>Mg(2+)</name>
        <dbReference type="ChEBI" id="CHEBI:18420"/>
    </cofactor>
</comment>
<comment type="pathway">
    <text evidence="1">Amino-acid biosynthesis; L-isoleucine biosynthesis; L-isoleucine from 2-oxobutanoate: step 3/4.</text>
</comment>
<comment type="pathway">
    <text evidence="1">Amino-acid biosynthesis; L-valine biosynthesis; L-valine from pyruvate: step 3/4.</text>
</comment>
<comment type="subunit">
    <text evidence="1">Homodimer.</text>
</comment>
<comment type="similarity">
    <text evidence="1">Belongs to the IlvD/Edd family.</text>
</comment>
<keyword id="KW-0001">2Fe-2S</keyword>
<keyword id="KW-0028">Amino-acid biosynthesis</keyword>
<keyword id="KW-0100">Branched-chain amino acid biosynthesis</keyword>
<keyword id="KW-0408">Iron</keyword>
<keyword id="KW-0411">Iron-sulfur</keyword>
<keyword id="KW-0456">Lyase</keyword>
<keyword id="KW-0460">Magnesium</keyword>
<keyword id="KW-0479">Metal-binding</keyword>
<keyword id="KW-1185">Reference proteome</keyword>
<gene>
    <name evidence="1" type="primary">ilvD</name>
    <name type="ordered locus">GK2046</name>
</gene>
<feature type="chain" id="PRO_0000225393" description="Dihydroxy-acid dehydratase">
    <location>
        <begin position="1"/>
        <end position="559"/>
    </location>
</feature>
<feature type="active site" description="Proton acceptor" evidence="1">
    <location>
        <position position="474"/>
    </location>
</feature>
<feature type="binding site" evidence="1">
    <location>
        <position position="81"/>
    </location>
    <ligand>
        <name>Mg(2+)</name>
        <dbReference type="ChEBI" id="CHEBI:18420"/>
    </ligand>
</feature>
<feature type="binding site" evidence="1">
    <location>
        <position position="122"/>
    </location>
    <ligand>
        <name>[2Fe-2S] cluster</name>
        <dbReference type="ChEBI" id="CHEBI:190135"/>
    </ligand>
</feature>
<feature type="binding site" evidence="1">
    <location>
        <position position="123"/>
    </location>
    <ligand>
        <name>Mg(2+)</name>
        <dbReference type="ChEBI" id="CHEBI:18420"/>
    </ligand>
</feature>
<feature type="binding site" description="via carbamate group" evidence="1">
    <location>
        <position position="124"/>
    </location>
    <ligand>
        <name>Mg(2+)</name>
        <dbReference type="ChEBI" id="CHEBI:18420"/>
    </ligand>
</feature>
<feature type="binding site" evidence="1">
    <location>
        <position position="195"/>
    </location>
    <ligand>
        <name>[2Fe-2S] cluster</name>
        <dbReference type="ChEBI" id="CHEBI:190135"/>
    </ligand>
</feature>
<feature type="binding site" evidence="1">
    <location>
        <position position="448"/>
    </location>
    <ligand>
        <name>Mg(2+)</name>
        <dbReference type="ChEBI" id="CHEBI:18420"/>
    </ligand>
</feature>
<feature type="modified residue" description="N6-carboxylysine" evidence="1">
    <location>
        <position position="124"/>
    </location>
</feature>
<evidence type="ECO:0000255" key="1">
    <source>
        <dbReference type="HAMAP-Rule" id="MF_00012"/>
    </source>
</evidence>
<proteinExistence type="inferred from homology"/>
<reference key="1">
    <citation type="journal article" date="2004" name="Nucleic Acids Res.">
        <title>Thermoadaptation trait revealed by the genome sequence of thermophilic Geobacillus kaustophilus.</title>
        <authorList>
            <person name="Takami H."/>
            <person name="Takaki Y."/>
            <person name="Chee G.-J."/>
            <person name="Nishi S."/>
            <person name="Shimamura S."/>
            <person name="Suzuki H."/>
            <person name="Matsui S."/>
            <person name="Uchiyama I."/>
        </authorList>
    </citation>
    <scope>NUCLEOTIDE SEQUENCE [LARGE SCALE GENOMIC DNA]</scope>
    <source>
        <strain>HTA426</strain>
    </source>
</reference>
<name>ILVD_GEOKA</name>
<accession>Q5KYA5</accession>
<organism>
    <name type="scientific">Geobacillus kaustophilus (strain HTA426)</name>
    <dbReference type="NCBI Taxonomy" id="235909"/>
    <lineage>
        <taxon>Bacteria</taxon>
        <taxon>Bacillati</taxon>
        <taxon>Bacillota</taxon>
        <taxon>Bacilli</taxon>
        <taxon>Bacillales</taxon>
        <taxon>Anoxybacillaceae</taxon>
        <taxon>Geobacillus</taxon>
        <taxon>Geobacillus thermoleovorans group</taxon>
    </lineage>
</organism>
<sequence length="559" mass="59669">MKKRRSDMIKKGFDRAPHRSLLRAAGVKDEDFDKPFIAVVNSYIDIIPGHVHLQEFGRIVKEAIREAGGVPFEMNTIGVDDGIAMGHIGMRYSLPSREIIADSIETVISAHWFDGMVCIPNCDKITPGMMMAAMRLNIPTIFVSGGPMKAGVTKDGRKISLSSVFEGVGAYLGGTLDEKGLEELERYGCPTCGSCSGMFTANSMNCLAEALGLALPGNGTILAVDPARKELVRQSAKQLMYLIEHDIKPRDIVTEKAIDNAFALDMALGGSTNTVLHTLAIANEAGIDYSLERINEVASRVPHLAKLAPASDVHYIEDLHEAGGVSAVLNELSKKEGALHLDTLTVTGKTLGENIAGCEVKNYDVIRPIDNPYSETGGLTILFGNLAPDGAVIKTGAVQGGITRHEGPAIVFDSQEEALEGIASGKIKPGHVVVIRYEGPKGGPGMPEMLAPTSQIVGMGLGTKVALVTDGRFSGASRGLSVGHVSPEAAEGGPIAFIQDGDIIEIDTVKRTINVKLSDEELERRKANWKGFEPKVKTGYLARYSKHVTSASTGGIMRI</sequence>
<dbReference type="EC" id="4.2.1.9" evidence="1"/>
<dbReference type="EMBL" id="BA000043">
    <property type="protein sequence ID" value="BAD76331.1"/>
    <property type="molecule type" value="Genomic_DNA"/>
</dbReference>
<dbReference type="RefSeq" id="WP_011231532.1">
    <property type="nucleotide sequence ID" value="NC_006510.1"/>
</dbReference>
<dbReference type="SMR" id="Q5KYA5"/>
<dbReference type="STRING" id="235909.GK2046"/>
<dbReference type="KEGG" id="gka:GK2046"/>
<dbReference type="PATRIC" id="fig|235909.7.peg.2196"/>
<dbReference type="eggNOG" id="COG0129">
    <property type="taxonomic scope" value="Bacteria"/>
</dbReference>
<dbReference type="HOGENOM" id="CLU_014271_4_2_9"/>
<dbReference type="UniPathway" id="UPA00047">
    <property type="reaction ID" value="UER00057"/>
</dbReference>
<dbReference type="UniPathway" id="UPA00049">
    <property type="reaction ID" value="UER00061"/>
</dbReference>
<dbReference type="Proteomes" id="UP000001172">
    <property type="component" value="Chromosome"/>
</dbReference>
<dbReference type="GO" id="GO:0005829">
    <property type="term" value="C:cytosol"/>
    <property type="evidence" value="ECO:0007669"/>
    <property type="project" value="TreeGrafter"/>
</dbReference>
<dbReference type="GO" id="GO:0051537">
    <property type="term" value="F:2 iron, 2 sulfur cluster binding"/>
    <property type="evidence" value="ECO:0007669"/>
    <property type="project" value="UniProtKB-UniRule"/>
</dbReference>
<dbReference type="GO" id="GO:0004160">
    <property type="term" value="F:dihydroxy-acid dehydratase activity"/>
    <property type="evidence" value="ECO:0007669"/>
    <property type="project" value="UniProtKB-UniRule"/>
</dbReference>
<dbReference type="GO" id="GO:0000287">
    <property type="term" value="F:magnesium ion binding"/>
    <property type="evidence" value="ECO:0007669"/>
    <property type="project" value="UniProtKB-UniRule"/>
</dbReference>
<dbReference type="GO" id="GO:0009097">
    <property type="term" value="P:isoleucine biosynthetic process"/>
    <property type="evidence" value="ECO:0007669"/>
    <property type="project" value="UniProtKB-UniRule"/>
</dbReference>
<dbReference type="GO" id="GO:0009099">
    <property type="term" value="P:L-valine biosynthetic process"/>
    <property type="evidence" value="ECO:0007669"/>
    <property type="project" value="UniProtKB-UniRule"/>
</dbReference>
<dbReference type="FunFam" id="3.50.30.80:FF:000001">
    <property type="entry name" value="Dihydroxy-acid dehydratase"/>
    <property type="match status" value="1"/>
</dbReference>
<dbReference type="Gene3D" id="3.50.30.80">
    <property type="entry name" value="IlvD/EDD C-terminal domain-like"/>
    <property type="match status" value="1"/>
</dbReference>
<dbReference type="HAMAP" id="MF_00012">
    <property type="entry name" value="IlvD"/>
    <property type="match status" value="1"/>
</dbReference>
<dbReference type="InterPro" id="IPR042096">
    <property type="entry name" value="Dihydro-acid_dehy_C"/>
</dbReference>
<dbReference type="InterPro" id="IPR004404">
    <property type="entry name" value="DihydroxyA_deHydtase"/>
</dbReference>
<dbReference type="InterPro" id="IPR020558">
    <property type="entry name" value="DiOHA_6PGluconate_deHydtase_CS"/>
</dbReference>
<dbReference type="InterPro" id="IPR056740">
    <property type="entry name" value="ILV_EDD_C"/>
</dbReference>
<dbReference type="InterPro" id="IPR000581">
    <property type="entry name" value="ILV_EDD_N"/>
</dbReference>
<dbReference type="InterPro" id="IPR037237">
    <property type="entry name" value="IlvD/EDD_N"/>
</dbReference>
<dbReference type="NCBIfam" id="TIGR00110">
    <property type="entry name" value="ilvD"/>
    <property type="match status" value="1"/>
</dbReference>
<dbReference type="NCBIfam" id="NF002068">
    <property type="entry name" value="PRK00911.1"/>
    <property type="match status" value="1"/>
</dbReference>
<dbReference type="PANTHER" id="PTHR43661">
    <property type="entry name" value="D-XYLONATE DEHYDRATASE"/>
    <property type="match status" value="1"/>
</dbReference>
<dbReference type="PANTHER" id="PTHR43661:SF3">
    <property type="entry name" value="D-XYLONATE DEHYDRATASE YAGF-RELATED"/>
    <property type="match status" value="1"/>
</dbReference>
<dbReference type="Pfam" id="PF24877">
    <property type="entry name" value="ILV_EDD_C"/>
    <property type="match status" value="1"/>
</dbReference>
<dbReference type="Pfam" id="PF00920">
    <property type="entry name" value="ILVD_EDD_N"/>
    <property type="match status" value="1"/>
</dbReference>
<dbReference type="SUPFAM" id="SSF143975">
    <property type="entry name" value="IlvD/EDD N-terminal domain-like"/>
    <property type="match status" value="1"/>
</dbReference>
<dbReference type="SUPFAM" id="SSF52016">
    <property type="entry name" value="LeuD/IlvD-like"/>
    <property type="match status" value="1"/>
</dbReference>
<dbReference type="PROSITE" id="PS00886">
    <property type="entry name" value="ILVD_EDD_1"/>
    <property type="match status" value="1"/>
</dbReference>
<dbReference type="PROSITE" id="PS00887">
    <property type="entry name" value="ILVD_EDD_2"/>
    <property type="match status" value="1"/>
</dbReference>
<protein>
    <recommendedName>
        <fullName evidence="1">Dihydroxy-acid dehydratase</fullName>
        <shortName evidence="1">DAD</shortName>
        <ecNumber evidence="1">4.2.1.9</ecNumber>
    </recommendedName>
</protein>